<dbReference type="EC" id="6.3.2.8" evidence="1"/>
<dbReference type="EMBL" id="CP000922">
    <property type="protein sequence ID" value="ACJ32835.1"/>
    <property type="molecule type" value="Genomic_DNA"/>
</dbReference>
<dbReference type="RefSeq" id="WP_012574158.1">
    <property type="nucleotide sequence ID" value="NC_011567.1"/>
</dbReference>
<dbReference type="SMR" id="B7GK78"/>
<dbReference type="STRING" id="491915.Aflv_0451"/>
<dbReference type="GeneID" id="7036708"/>
<dbReference type="KEGG" id="afl:Aflv_0451"/>
<dbReference type="PATRIC" id="fig|491915.6.peg.461"/>
<dbReference type="eggNOG" id="COG0773">
    <property type="taxonomic scope" value="Bacteria"/>
</dbReference>
<dbReference type="HOGENOM" id="CLU_028104_1_0_9"/>
<dbReference type="UniPathway" id="UPA00219"/>
<dbReference type="Proteomes" id="UP000000742">
    <property type="component" value="Chromosome"/>
</dbReference>
<dbReference type="GO" id="GO:0005737">
    <property type="term" value="C:cytoplasm"/>
    <property type="evidence" value="ECO:0007669"/>
    <property type="project" value="UniProtKB-SubCell"/>
</dbReference>
<dbReference type="GO" id="GO:0005524">
    <property type="term" value="F:ATP binding"/>
    <property type="evidence" value="ECO:0007669"/>
    <property type="project" value="UniProtKB-UniRule"/>
</dbReference>
<dbReference type="GO" id="GO:0008763">
    <property type="term" value="F:UDP-N-acetylmuramate-L-alanine ligase activity"/>
    <property type="evidence" value="ECO:0007669"/>
    <property type="project" value="UniProtKB-UniRule"/>
</dbReference>
<dbReference type="GO" id="GO:0051301">
    <property type="term" value="P:cell division"/>
    <property type="evidence" value="ECO:0007669"/>
    <property type="project" value="UniProtKB-KW"/>
</dbReference>
<dbReference type="GO" id="GO:0071555">
    <property type="term" value="P:cell wall organization"/>
    <property type="evidence" value="ECO:0007669"/>
    <property type="project" value="UniProtKB-KW"/>
</dbReference>
<dbReference type="GO" id="GO:0009252">
    <property type="term" value="P:peptidoglycan biosynthetic process"/>
    <property type="evidence" value="ECO:0007669"/>
    <property type="project" value="UniProtKB-UniRule"/>
</dbReference>
<dbReference type="GO" id="GO:0008360">
    <property type="term" value="P:regulation of cell shape"/>
    <property type="evidence" value="ECO:0007669"/>
    <property type="project" value="UniProtKB-KW"/>
</dbReference>
<dbReference type="Gene3D" id="3.90.190.20">
    <property type="entry name" value="Mur ligase, C-terminal domain"/>
    <property type="match status" value="1"/>
</dbReference>
<dbReference type="Gene3D" id="3.40.1190.10">
    <property type="entry name" value="Mur-like, catalytic domain"/>
    <property type="match status" value="1"/>
</dbReference>
<dbReference type="Gene3D" id="3.40.50.720">
    <property type="entry name" value="NAD(P)-binding Rossmann-like Domain"/>
    <property type="match status" value="1"/>
</dbReference>
<dbReference type="HAMAP" id="MF_00046">
    <property type="entry name" value="MurC"/>
    <property type="match status" value="1"/>
</dbReference>
<dbReference type="InterPro" id="IPR036565">
    <property type="entry name" value="Mur-like_cat_sf"/>
</dbReference>
<dbReference type="InterPro" id="IPR004101">
    <property type="entry name" value="Mur_ligase_C"/>
</dbReference>
<dbReference type="InterPro" id="IPR036615">
    <property type="entry name" value="Mur_ligase_C_dom_sf"/>
</dbReference>
<dbReference type="InterPro" id="IPR013221">
    <property type="entry name" value="Mur_ligase_cen"/>
</dbReference>
<dbReference type="InterPro" id="IPR000713">
    <property type="entry name" value="Mur_ligase_N"/>
</dbReference>
<dbReference type="InterPro" id="IPR050061">
    <property type="entry name" value="MurCDEF_pg_biosynth"/>
</dbReference>
<dbReference type="InterPro" id="IPR005758">
    <property type="entry name" value="UDP-N-AcMur_Ala_ligase_MurC"/>
</dbReference>
<dbReference type="NCBIfam" id="TIGR01082">
    <property type="entry name" value="murC"/>
    <property type="match status" value="1"/>
</dbReference>
<dbReference type="PANTHER" id="PTHR43445:SF3">
    <property type="entry name" value="UDP-N-ACETYLMURAMATE--L-ALANINE LIGASE"/>
    <property type="match status" value="1"/>
</dbReference>
<dbReference type="PANTHER" id="PTHR43445">
    <property type="entry name" value="UDP-N-ACETYLMURAMATE--L-ALANINE LIGASE-RELATED"/>
    <property type="match status" value="1"/>
</dbReference>
<dbReference type="Pfam" id="PF01225">
    <property type="entry name" value="Mur_ligase"/>
    <property type="match status" value="1"/>
</dbReference>
<dbReference type="Pfam" id="PF02875">
    <property type="entry name" value="Mur_ligase_C"/>
    <property type="match status" value="1"/>
</dbReference>
<dbReference type="Pfam" id="PF08245">
    <property type="entry name" value="Mur_ligase_M"/>
    <property type="match status" value="1"/>
</dbReference>
<dbReference type="SUPFAM" id="SSF51984">
    <property type="entry name" value="MurCD N-terminal domain"/>
    <property type="match status" value="1"/>
</dbReference>
<dbReference type="SUPFAM" id="SSF53623">
    <property type="entry name" value="MurD-like peptide ligases, catalytic domain"/>
    <property type="match status" value="1"/>
</dbReference>
<dbReference type="SUPFAM" id="SSF53244">
    <property type="entry name" value="MurD-like peptide ligases, peptide-binding domain"/>
    <property type="match status" value="1"/>
</dbReference>
<name>MURC_ANOFW</name>
<sequence>MTIYHFVGIKGTGMSALAQVLHDMKCVVQGSDYDKRFFTQEALEARGIPIFPFSAQNIRENMVVIAGNAFPDTHEEIVAARELGVPVIRYHQFLGDFLQKFTSIAVTGAHGKTSTTGLLAHVMQGAKPTSYLIGDGSGKGREGSEYFVFEACEYRRHFLAYSPDYAIMTNIDFDHPDYFANIEDVFSAFQQMAWQVKKGIIACGDDEYLQKIQAKVPVVFYGFGEDNDFQARNIVKTPEGTSFDVFVRHTFFASFHIPRYGDHNVLNALAVIALCHYEGIDVNIIQERLKTFPGVKRRFHEKMLGSQVLIDDYAHHPTEIRATIEAARQKYPERQIVAIFQPHTYTRTQTFLDEFAESLSLADAVYLCDIFSSAREHQGKLSIEDLRAKIEGAKLLDEEQVDVLKQHDNAVLIFMGAGDIQKFQEKYEQSVHV</sequence>
<feature type="chain" id="PRO_1000116614" description="UDP-N-acetylmuramate--L-alanine ligase">
    <location>
        <begin position="1"/>
        <end position="433"/>
    </location>
</feature>
<feature type="binding site" evidence="1">
    <location>
        <begin position="108"/>
        <end position="114"/>
    </location>
    <ligand>
        <name>ATP</name>
        <dbReference type="ChEBI" id="CHEBI:30616"/>
    </ligand>
</feature>
<protein>
    <recommendedName>
        <fullName evidence="1">UDP-N-acetylmuramate--L-alanine ligase</fullName>
        <ecNumber evidence="1">6.3.2.8</ecNumber>
    </recommendedName>
    <alternativeName>
        <fullName evidence="1">UDP-N-acetylmuramoyl-L-alanine synthetase</fullName>
    </alternativeName>
</protein>
<keyword id="KW-0067">ATP-binding</keyword>
<keyword id="KW-0131">Cell cycle</keyword>
<keyword id="KW-0132">Cell division</keyword>
<keyword id="KW-0133">Cell shape</keyword>
<keyword id="KW-0961">Cell wall biogenesis/degradation</keyword>
<keyword id="KW-0963">Cytoplasm</keyword>
<keyword id="KW-0436">Ligase</keyword>
<keyword id="KW-0547">Nucleotide-binding</keyword>
<keyword id="KW-0573">Peptidoglycan synthesis</keyword>
<reference key="1">
    <citation type="journal article" date="2008" name="Genome Biol.">
        <title>Encapsulated in silica: genome, proteome and physiology of the thermophilic bacterium Anoxybacillus flavithermus WK1.</title>
        <authorList>
            <person name="Saw J.H."/>
            <person name="Mountain B.W."/>
            <person name="Feng L."/>
            <person name="Omelchenko M.V."/>
            <person name="Hou S."/>
            <person name="Saito J.A."/>
            <person name="Stott M.B."/>
            <person name="Li D."/>
            <person name="Zhao G."/>
            <person name="Wu J."/>
            <person name="Galperin M.Y."/>
            <person name="Koonin E.V."/>
            <person name="Makarova K.S."/>
            <person name="Wolf Y.I."/>
            <person name="Rigden D.J."/>
            <person name="Dunfield P.F."/>
            <person name="Wang L."/>
            <person name="Alam M."/>
        </authorList>
    </citation>
    <scope>NUCLEOTIDE SEQUENCE [LARGE SCALE GENOMIC DNA]</scope>
    <source>
        <strain>DSM 21510 / WK1</strain>
    </source>
</reference>
<proteinExistence type="inferred from homology"/>
<accession>B7GK78</accession>
<evidence type="ECO:0000255" key="1">
    <source>
        <dbReference type="HAMAP-Rule" id="MF_00046"/>
    </source>
</evidence>
<comment type="function">
    <text evidence="1">Cell wall formation.</text>
</comment>
<comment type="catalytic activity">
    <reaction evidence="1">
        <text>UDP-N-acetyl-alpha-D-muramate + L-alanine + ATP = UDP-N-acetyl-alpha-D-muramoyl-L-alanine + ADP + phosphate + H(+)</text>
        <dbReference type="Rhea" id="RHEA:23372"/>
        <dbReference type="ChEBI" id="CHEBI:15378"/>
        <dbReference type="ChEBI" id="CHEBI:30616"/>
        <dbReference type="ChEBI" id="CHEBI:43474"/>
        <dbReference type="ChEBI" id="CHEBI:57972"/>
        <dbReference type="ChEBI" id="CHEBI:70757"/>
        <dbReference type="ChEBI" id="CHEBI:83898"/>
        <dbReference type="ChEBI" id="CHEBI:456216"/>
        <dbReference type="EC" id="6.3.2.8"/>
    </reaction>
</comment>
<comment type="pathway">
    <text evidence="1">Cell wall biogenesis; peptidoglycan biosynthesis.</text>
</comment>
<comment type="subcellular location">
    <subcellularLocation>
        <location evidence="1">Cytoplasm</location>
    </subcellularLocation>
</comment>
<comment type="similarity">
    <text evidence="1">Belongs to the MurCDEF family.</text>
</comment>
<organism>
    <name type="scientific">Anoxybacillus flavithermus (strain DSM 21510 / WK1)</name>
    <dbReference type="NCBI Taxonomy" id="491915"/>
    <lineage>
        <taxon>Bacteria</taxon>
        <taxon>Bacillati</taxon>
        <taxon>Bacillota</taxon>
        <taxon>Bacilli</taxon>
        <taxon>Bacillales</taxon>
        <taxon>Anoxybacillaceae</taxon>
        <taxon>Anoxybacillus</taxon>
    </lineage>
</organism>
<gene>
    <name evidence="1" type="primary">murC</name>
    <name type="ordered locus">Aflv_0451</name>
</gene>